<keyword id="KW-0686">Riboflavin biosynthesis</keyword>
<keyword id="KW-0808">Transferase</keyword>
<gene>
    <name evidence="1" type="primary">ribH</name>
    <name type="ordered locus">Ava_1704</name>
</gene>
<sequence length="190" mass="20681">MAVFEGTFTQTEPLRLAIVIGRFNDLVTTKLLAGCQDCLKRHGVDPDPHGNQVDYVWVPGSFEVPLVARQLALTHRYDAIICLGAVIRGQTPHFDYVSAEVSKGIAAASFQTGVPVIFGILTVDTMQQALERAGIKANHGWDYAMNALEMASLMRQLRSNVTDSYTQTQSLPAAFPNASIGKLTAESEEV</sequence>
<feature type="chain" id="PRO_1000040362" description="6,7-dimethyl-8-ribityllumazine synthase">
    <location>
        <begin position="1"/>
        <end position="190"/>
    </location>
</feature>
<feature type="active site" description="Proton donor" evidence="1">
    <location>
        <position position="93"/>
    </location>
</feature>
<feature type="binding site" evidence="1">
    <location>
        <position position="23"/>
    </location>
    <ligand>
        <name>5-amino-6-(D-ribitylamino)uracil</name>
        <dbReference type="ChEBI" id="CHEBI:15934"/>
    </ligand>
</feature>
<feature type="binding site" evidence="1">
    <location>
        <begin position="61"/>
        <end position="63"/>
    </location>
    <ligand>
        <name>5-amino-6-(D-ribitylamino)uracil</name>
        <dbReference type="ChEBI" id="CHEBI:15934"/>
    </ligand>
</feature>
<feature type="binding site" evidence="1">
    <location>
        <begin position="85"/>
        <end position="87"/>
    </location>
    <ligand>
        <name>5-amino-6-(D-ribitylamino)uracil</name>
        <dbReference type="ChEBI" id="CHEBI:15934"/>
    </ligand>
</feature>
<feature type="binding site" evidence="1">
    <location>
        <begin position="90"/>
        <end position="91"/>
    </location>
    <ligand>
        <name>(2S)-2-hydroxy-3-oxobutyl phosphate</name>
        <dbReference type="ChEBI" id="CHEBI:58830"/>
    </ligand>
</feature>
<feature type="binding site" evidence="1">
    <location>
        <position position="118"/>
    </location>
    <ligand>
        <name>5-amino-6-(D-ribitylamino)uracil</name>
        <dbReference type="ChEBI" id="CHEBI:15934"/>
    </ligand>
</feature>
<feature type="binding site" evidence="1">
    <location>
        <position position="132"/>
    </location>
    <ligand>
        <name>(2S)-2-hydroxy-3-oxobutyl phosphate</name>
        <dbReference type="ChEBI" id="CHEBI:58830"/>
    </ligand>
</feature>
<reference key="1">
    <citation type="journal article" date="2014" name="Stand. Genomic Sci.">
        <title>Complete genome sequence of Anabaena variabilis ATCC 29413.</title>
        <authorList>
            <person name="Thiel T."/>
            <person name="Pratte B.S."/>
            <person name="Zhong J."/>
            <person name="Goodwin L."/>
            <person name="Copeland A."/>
            <person name="Lucas S."/>
            <person name="Han C."/>
            <person name="Pitluck S."/>
            <person name="Land M.L."/>
            <person name="Kyrpides N.C."/>
            <person name="Woyke T."/>
        </authorList>
    </citation>
    <scope>NUCLEOTIDE SEQUENCE [LARGE SCALE GENOMIC DNA]</scope>
    <source>
        <strain>ATCC 29413 / PCC 7937</strain>
    </source>
</reference>
<dbReference type="EC" id="2.5.1.78" evidence="1"/>
<dbReference type="EMBL" id="CP000117">
    <property type="protein sequence ID" value="ABA21326.1"/>
    <property type="molecule type" value="Genomic_DNA"/>
</dbReference>
<dbReference type="SMR" id="Q3MCG0"/>
<dbReference type="STRING" id="240292.Ava_1704"/>
<dbReference type="KEGG" id="ava:Ava_1704"/>
<dbReference type="eggNOG" id="COG0054">
    <property type="taxonomic scope" value="Bacteria"/>
</dbReference>
<dbReference type="HOGENOM" id="CLU_089358_1_0_3"/>
<dbReference type="UniPathway" id="UPA00275">
    <property type="reaction ID" value="UER00404"/>
</dbReference>
<dbReference type="Proteomes" id="UP000002533">
    <property type="component" value="Chromosome"/>
</dbReference>
<dbReference type="GO" id="GO:0005829">
    <property type="term" value="C:cytosol"/>
    <property type="evidence" value="ECO:0007669"/>
    <property type="project" value="TreeGrafter"/>
</dbReference>
<dbReference type="GO" id="GO:0009349">
    <property type="term" value="C:riboflavin synthase complex"/>
    <property type="evidence" value="ECO:0007669"/>
    <property type="project" value="InterPro"/>
</dbReference>
<dbReference type="GO" id="GO:0000906">
    <property type="term" value="F:6,7-dimethyl-8-ribityllumazine synthase activity"/>
    <property type="evidence" value="ECO:0007669"/>
    <property type="project" value="UniProtKB-UniRule"/>
</dbReference>
<dbReference type="GO" id="GO:0009231">
    <property type="term" value="P:riboflavin biosynthetic process"/>
    <property type="evidence" value="ECO:0007669"/>
    <property type="project" value="UniProtKB-UniRule"/>
</dbReference>
<dbReference type="CDD" id="cd09209">
    <property type="entry name" value="Lumazine_synthase-I"/>
    <property type="match status" value="1"/>
</dbReference>
<dbReference type="FunFam" id="3.40.50.960:FF:000001">
    <property type="entry name" value="6,7-dimethyl-8-ribityllumazine synthase"/>
    <property type="match status" value="1"/>
</dbReference>
<dbReference type="Gene3D" id="3.40.50.960">
    <property type="entry name" value="Lumazine/riboflavin synthase"/>
    <property type="match status" value="1"/>
</dbReference>
<dbReference type="HAMAP" id="MF_00178">
    <property type="entry name" value="Lumazine_synth"/>
    <property type="match status" value="1"/>
</dbReference>
<dbReference type="InterPro" id="IPR034964">
    <property type="entry name" value="LS"/>
</dbReference>
<dbReference type="InterPro" id="IPR002180">
    <property type="entry name" value="LS/RS"/>
</dbReference>
<dbReference type="InterPro" id="IPR036467">
    <property type="entry name" value="LS/RS_sf"/>
</dbReference>
<dbReference type="NCBIfam" id="TIGR00114">
    <property type="entry name" value="lumazine-synth"/>
    <property type="match status" value="1"/>
</dbReference>
<dbReference type="PANTHER" id="PTHR21058:SF0">
    <property type="entry name" value="6,7-DIMETHYL-8-RIBITYLLUMAZINE SYNTHASE"/>
    <property type="match status" value="1"/>
</dbReference>
<dbReference type="PANTHER" id="PTHR21058">
    <property type="entry name" value="6,7-DIMETHYL-8-RIBITYLLUMAZINE SYNTHASE DMRL SYNTHASE LUMAZINE SYNTHASE"/>
    <property type="match status" value="1"/>
</dbReference>
<dbReference type="Pfam" id="PF00885">
    <property type="entry name" value="DMRL_synthase"/>
    <property type="match status" value="1"/>
</dbReference>
<dbReference type="SUPFAM" id="SSF52121">
    <property type="entry name" value="Lumazine synthase"/>
    <property type="match status" value="1"/>
</dbReference>
<organism>
    <name type="scientific">Trichormus variabilis (strain ATCC 29413 / PCC 7937)</name>
    <name type="common">Anabaena variabilis</name>
    <dbReference type="NCBI Taxonomy" id="240292"/>
    <lineage>
        <taxon>Bacteria</taxon>
        <taxon>Bacillati</taxon>
        <taxon>Cyanobacteriota</taxon>
        <taxon>Cyanophyceae</taxon>
        <taxon>Nostocales</taxon>
        <taxon>Nostocaceae</taxon>
        <taxon>Trichormus</taxon>
    </lineage>
</organism>
<name>RISB_TRIV2</name>
<proteinExistence type="inferred from homology"/>
<accession>Q3MCG0</accession>
<protein>
    <recommendedName>
        <fullName evidence="1">6,7-dimethyl-8-ribityllumazine synthase</fullName>
        <shortName evidence="1">DMRL synthase</shortName>
        <shortName evidence="1">LS</shortName>
        <shortName evidence="1">Lumazine synthase</shortName>
        <ecNumber evidence="1">2.5.1.78</ecNumber>
    </recommendedName>
</protein>
<comment type="function">
    <text evidence="1">Catalyzes the formation of 6,7-dimethyl-8-ribityllumazine by condensation of 5-amino-6-(D-ribitylamino)uracil with 3,4-dihydroxy-2-butanone 4-phosphate. This is the penultimate step in the biosynthesis of riboflavin.</text>
</comment>
<comment type="catalytic activity">
    <reaction evidence="1">
        <text>(2S)-2-hydroxy-3-oxobutyl phosphate + 5-amino-6-(D-ribitylamino)uracil = 6,7-dimethyl-8-(1-D-ribityl)lumazine + phosphate + 2 H2O + H(+)</text>
        <dbReference type="Rhea" id="RHEA:26152"/>
        <dbReference type="ChEBI" id="CHEBI:15377"/>
        <dbReference type="ChEBI" id="CHEBI:15378"/>
        <dbReference type="ChEBI" id="CHEBI:15934"/>
        <dbReference type="ChEBI" id="CHEBI:43474"/>
        <dbReference type="ChEBI" id="CHEBI:58201"/>
        <dbReference type="ChEBI" id="CHEBI:58830"/>
        <dbReference type="EC" id="2.5.1.78"/>
    </reaction>
</comment>
<comment type="pathway">
    <text evidence="1">Cofactor biosynthesis; riboflavin biosynthesis; riboflavin from 2-hydroxy-3-oxobutyl phosphate and 5-amino-6-(D-ribitylamino)uracil: step 1/2.</text>
</comment>
<comment type="similarity">
    <text evidence="1">Belongs to the DMRL synthase family.</text>
</comment>
<evidence type="ECO:0000255" key="1">
    <source>
        <dbReference type="HAMAP-Rule" id="MF_00178"/>
    </source>
</evidence>